<name>ARI3A_MOUSE</name>
<keyword id="KW-0010">Activator</keyword>
<keyword id="KW-0963">Cytoplasm</keyword>
<keyword id="KW-0238">DNA-binding</keyword>
<keyword id="KW-1017">Isopeptide bond</keyword>
<keyword id="KW-0539">Nucleus</keyword>
<keyword id="KW-0597">Phosphoprotein</keyword>
<keyword id="KW-1185">Reference proteome</keyword>
<keyword id="KW-0804">Transcription</keyword>
<keyword id="KW-0805">Transcription regulation</keyword>
<keyword id="KW-0832">Ubl conjugation</keyword>
<comment type="function">
    <text evidence="7 11 12">Transcription factor involved in B-cell differentiation. Binds a VH promoter proximal site necessary for induced mu-heavy-chain transcription. Binds the minor groove of a restricted ATC sequence that is sufficient for nuclear matrix association. This sequence motif is present in matrix-associating regions (MARS) proximal to the promoter and flanking E mu. Activates E mu-driven transcription by binding these sites. May be involved in the control of cell cycle progression by the RB1/E2F1 pathway.</text>
</comment>
<comment type="subunit">
    <text evidence="1 6 8 10">Homodimer. Heterodimer with ARID3B. Interacts with E2F1 (By similarity). Interacts with GTF2I and BTK.</text>
</comment>
<comment type="subcellular location">
    <subcellularLocation>
        <location>Nucleus</location>
    </subcellularLocation>
    <subcellularLocation>
        <location>Cytoplasm</location>
    </subcellularLocation>
    <text>Shuttles between nucleus and cytoplasm.</text>
</comment>
<comment type="tissue specificity">
    <text evidence="13">B-cell specific in the adult. Expressed in B-cell progenitors, down-regulated in the immature B-cell stage, and is up-regulated again at later stages of B-lymphocyte differentiation.</text>
</comment>
<comment type="developmental stage">
    <text evidence="13">Expressed in lymphocytes from fetal liver. Expressed in fetal thymus and brain.</text>
</comment>
<proteinExistence type="evidence at protein level"/>
<gene>
    <name type="primary">Arid3a</name>
    <name type="synonym">Dri1</name>
    <name type="synonym">Dril1</name>
</gene>
<accession>Q62431</accession>
<accession>Q3U338</accession>
<accession>Q80YP8</accession>
<dbReference type="EMBL" id="U60335">
    <property type="protein sequence ID" value="AAB03416.1"/>
    <property type="molecule type" value="mRNA"/>
</dbReference>
<dbReference type="EMBL" id="AK141283">
    <property type="protein sequence ID" value="BAE24635.1"/>
    <property type="molecule type" value="mRNA"/>
</dbReference>
<dbReference type="EMBL" id="AK154956">
    <property type="protein sequence ID" value="BAE32951.1"/>
    <property type="molecule type" value="mRNA"/>
</dbReference>
<dbReference type="EMBL" id="BC050925">
    <property type="protein sequence ID" value="AAH50925.1"/>
    <property type="molecule type" value="mRNA"/>
</dbReference>
<dbReference type="CCDS" id="CCDS23999.1"/>
<dbReference type="RefSeq" id="NP_001275554.1">
    <property type="nucleotide sequence ID" value="NM_001288625.1"/>
</dbReference>
<dbReference type="RefSeq" id="NP_001275555.1">
    <property type="nucleotide sequence ID" value="NM_001288626.1"/>
</dbReference>
<dbReference type="RefSeq" id="NP_031906.1">
    <property type="nucleotide sequence ID" value="NM_007880.4"/>
</dbReference>
<dbReference type="RefSeq" id="XP_006513264.1">
    <property type="nucleotide sequence ID" value="XM_006513201.5"/>
</dbReference>
<dbReference type="RefSeq" id="XP_006513265.1">
    <property type="nucleotide sequence ID" value="XM_006513202.5"/>
</dbReference>
<dbReference type="SMR" id="Q62431"/>
<dbReference type="BioGRID" id="199312">
    <property type="interactions" value="3"/>
</dbReference>
<dbReference type="FunCoup" id="Q62431">
    <property type="interactions" value="1950"/>
</dbReference>
<dbReference type="STRING" id="10090.ENSMUSP00000019708"/>
<dbReference type="GlyGen" id="Q62431">
    <property type="glycosylation" value="5 sites, 1 O-linked glycan (4 sites)"/>
</dbReference>
<dbReference type="iPTMnet" id="Q62431"/>
<dbReference type="PhosphoSitePlus" id="Q62431"/>
<dbReference type="jPOST" id="Q62431"/>
<dbReference type="PaxDb" id="10090-ENSMUSP00000019708"/>
<dbReference type="PeptideAtlas" id="Q62431"/>
<dbReference type="ProteomicsDB" id="282018"/>
<dbReference type="Antibodypedia" id="1435">
    <property type="antibodies" value="283 antibodies from 34 providers"/>
</dbReference>
<dbReference type="DNASU" id="13496"/>
<dbReference type="Ensembl" id="ENSMUST00000019708.12">
    <property type="protein sequence ID" value="ENSMUSP00000019708.6"/>
    <property type="gene ID" value="ENSMUSG00000019564.13"/>
</dbReference>
<dbReference type="Ensembl" id="ENSMUST00000105376.2">
    <property type="protein sequence ID" value="ENSMUSP00000101015.2"/>
    <property type="gene ID" value="ENSMUSG00000019564.13"/>
</dbReference>
<dbReference type="GeneID" id="13496"/>
<dbReference type="KEGG" id="mmu:13496"/>
<dbReference type="UCSC" id="uc007gap.2">
    <property type="organism name" value="mouse"/>
</dbReference>
<dbReference type="AGR" id="MGI:1328360"/>
<dbReference type="CTD" id="1820"/>
<dbReference type="MGI" id="MGI:1328360">
    <property type="gene designation" value="Arid3a"/>
</dbReference>
<dbReference type="VEuPathDB" id="HostDB:ENSMUSG00000019564"/>
<dbReference type="eggNOG" id="KOG2744">
    <property type="taxonomic scope" value="Eukaryota"/>
</dbReference>
<dbReference type="GeneTree" id="ENSGT00940000160899"/>
<dbReference type="HOGENOM" id="CLU_026952_3_0_1"/>
<dbReference type="InParanoid" id="Q62431"/>
<dbReference type="OMA" id="MKPKWEE"/>
<dbReference type="OrthoDB" id="10044343at2759"/>
<dbReference type="PhylomeDB" id="Q62431"/>
<dbReference type="TreeFam" id="TF320364"/>
<dbReference type="BioGRID-ORCS" id="13496">
    <property type="hits" value="3 hits in 79 CRISPR screens"/>
</dbReference>
<dbReference type="ChiTaRS" id="Arid3a">
    <property type="organism name" value="mouse"/>
</dbReference>
<dbReference type="PRO" id="PR:Q62431"/>
<dbReference type="Proteomes" id="UP000000589">
    <property type="component" value="Chromosome 10"/>
</dbReference>
<dbReference type="RNAct" id="Q62431">
    <property type="molecule type" value="protein"/>
</dbReference>
<dbReference type="Bgee" id="ENSMUSG00000019564">
    <property type="expression patterns" value="Expressed in granulocyte and 155 other cell types or tissues"/>
</dbReference>
<dbReference type="ExpressionAtlas" id="Q62431">
    <property type="expression patterns" value="baseline and differential"/>
</dbReference>
<dbReference type="GO" id="GO:0005829">
    <property type="term" value="C:cytosol"/>
    <property type="evidence" value="ECO:0007669"/>
    <property type="project" value="Ensembl"/>
</dbReference>
<dbReference type="GO" id="GO:0045121">
    <property type="term" value="C:membrane raft"/>
    <property type="evidence" value="ECO:0000266"/>
    <property type="project" value="MGI"/>
</dbReference>
<dbReference type="GO" id="GO:0005654">
    <property type="term" value="C:nucleoplasm"/>
    <property type="evidence" value="ECO:0007669"/>
    <property type="project" value="Ensembl"/>
</dbReference>
<dbReference type="GO" id="GO:0005634">
    <property type="term" value="C:nucleus"/>
    <property type="evidence" value="ECO:0000314"/>
    <property type="project" value="MGI"/>
</dbReference>
<dbReference type="GO" id="GO:0003682">
    <property type="term" value="F:chromatin binding"/>
    <property type="evidence" value="ECO:0000314"/>
    <property type="project" value="MGI"/>
</dbReference>
<dbReference type="GO" id="GO:0003677">
    <property type="term" value="F:DNA binding"/>
    <property type="evidence" value="ECO:0000314"/>
    <property type="project" value="MGI"/>
</dbReference>
<dbReference type="GO" id="GO:0042802">
    <property type="term" value="F:identical protein binding"/>
    <property type="evidence" value="ECO:0000353"/>
    <property type="project" value="MGI"/>
</dbReference>
<dbReference type="GO" id="GO:0003712">
    <property type="term" value="F:transcription coregulator activity"/>
    <property type="evidence" value="ECO:0000314"/>
    <property type="project" value="MGI"/>
</dbReference>
<dbReference type="GO" id="GO:0045944">
    <property type="term" value="P:positive regulation of transcription by RNA polymerase II"/>
    <property type="evidence" value="ECO:0000315"/>
    <property type="project" value="NTNU_SB"/>
</dbReference>
<dbReference type="GO" id="GO:0006355">
    <property type="term" value="P:regulation of DNA-templated transcription"/>
    <property type="evidence" value="ECO:0000314"/>
    <property type="project" value="MGI"/>
</dbReference>
<dbReference type="CDD" id="cd16878">
    <property type="entry name" value="ARID_ARID3A"/>
    <property type="match status" value="1"/>
</dbReference>
<dbReference type="FunFam" id="1.10.150.60:FF:000006">
    <property type="entry name" value="AT-rich interactive domain-containing protein 3A"/>
    <property type="match status" value="1"/>
</dbReference>
<dbReference type="Gene3D" id="1.10.150.60">
    <property type="entry name" value="ARID DNA-binding domain"/>
    <property type="match status" value="1"/>
</dbReference>
<dbReference type="InterPro" id="IPR045147">
    <property type="entry name" value="ARI3A/B/C"/>
</dbReference>
<dbReference type="InterPro" id="IPR001606">
    <property type="entry name" value="ARID_dom"/>
</dbReference>
<dbReference type="InterPro" id="IPR036431">
    <property type="entry name" value="ARID_dom_sf"/>
</dbReference>
<dbReference type="InterPro" id="IPR023334">
    <property type="entry name" value="REKLES_domain"/>
</dbReference>
<dbReference type="PANTHER" id="PTHR15348:SF1">
    <property type="entry name" value="AT-RICH INTERACTIVE DOMAIN-CONTAINING PROTEIN 3A"/>
    <property type="match status" value="1"/>
</dbReference>
<dbReference type="PANTHER" id="PTHR15348">
    <property type="entry name" value="AT-RICH INTERACTIVE DOMAIN-CONTAINING PROTEIN ARID DOMAIN- CONTAINING PROTEIN DEAD RINGER PROTEIN B-CELL REGULATOR OF IGH TRANSCRIPTION BRIGHT"/>
    <property type="match status" value="1"/>
</dbReference>
<dbReference type="Pfam" id="PF01388">
    <property type="entry name" value="ARID"/>
    <property type="match status" value="1"/>
</dbReference>
<dbReference type="SMART" id="SM01014">
    <property type="entry name" value="ARID"/>
    <property type="match status" value="1"/>
</dbReference>
<dbReference type="SMART" id="SM00501">
    <property type="entry name" value="BRIGHT"/>
    <property type="match status" value="1"/>
</dbReference>
<dbReference type="SUPFAM" id="SSF46774">
    <property type="entry name" value="ARID-like"/>
    <property type="match status" value="1"/>
</dbReference>
<dbReference type="PROSITE" id="PS51011">
    <property type="entry name" value="ARID"/>
    <property type="match status" value="1"/>
</dbReference>
<dbReference type="PROSITE" id="PS51486">
    <property type="entry name" value="REKLES"/>
    <property type="match status" value="1"/>
</dbReference>
<feature type="chain" id="PRO_0000200579" description="AT-rich interactive domain-containing protein 3A">
    <location>
        <begin position="1"/>
        <end position="601"/>
    </location>
</feature>
<feature type="domain" description="ARID" evidence="3">
    <location>
        <begin position="243"/>
        <end position="335"/>
    </location>
</feature>
<feature type="domain" description="REKLES" evidence="4">
    <location>
        <begin position="449"/>
        <end position="546"/>
    </location>
</feature>
<feature type="region of interest" description="Disordered" evidence="5">
    <location>
        <begin position="1"/>
        <end position="224"/>
    </location>
</feature>
<feature type="region of interest" description="Acidic">
    <location>
        <begin position="128"/>
        <end position="165"/>
    </location>
</feature>
<feature type="region of interest" description="Important for nuclear localization">
    <location>
        <begin position="450"/>
        <end position="493"/>
    </location>
</feature>
<feature type="region of interest" description="Homodimerization" evidence="1">
    <location>
        <begin position="495"/>
        <end position="518"/>
    </location>
</feature>
<feature type="region of interest" description="Important for cytoplasmic localization">
    <location>
        <begin position="542"/>
        <end position="562"/>
    </location>
</feature>
<feature type="region of interest" description="Disordered" evidence="5">
    <location>
        <begin position="545"/>
        <end position="601"/>
    </location>
</feature>
<feature type="compositionally biased region" description="Low complexity" evidence="5">
    <location>
        <begin position="60"/>
        <end position="89"/>
    </location>
</feature>
<feature type="compositionally biased region" description="Basic and acidic residues" evidence="5">
    <location>
        <begin position="114"/>
        <end position="123"/>
    </location>
</feature>
<feature type="compositionally biased region" description="Acidic residues" evidence="5">
    <location>
        <begin position="139"/>
        <end position="166"/>
    </location>
</feature>
<feature type="compositionally biased region" description="Low complexity" evidence="5">
    <location>
        <begin position="559"/>
        <end position="579"/>
    </location>
</feature>
<feature type="compositionally biased region" description="Low complexity" evidence="5">
    <location>
        <begin position="588"/>
        <end position="601"/>
    </location>
</feature>
<feature type="modified residue" description="Phosphoserine" evidence="2">
    <location>
        <position position="78"/>
    </location>
</feature>
<feature type="modified residue" description="Phosphoserine" evidence="16">
    <location>
        <position position="82"/>
    </location>
</feature>
<feature type="modified residue" description="Phosphoserine" evidence="16">
    <location>
        <position position="89"/>
    </location>
</feature>
<feature type="modified residue" description="Phosphothreonine" evidence="2">
    <location>
        <position position="99"/>
    </location>
</feature>
<feature type="modified residue" description="Phosphoserine" evidence="2">
    <location>
        <position position="102"/>
    </location>
</feature>
<feature type="modified residue" description="Phosphoserine" evidence="15 16">
    <location>
        <position position="127"/>
    </location>
</feature>
<feature type="modified residue" description="Phosphoserine" evidence="16">
    <location>
        <position position="358"/>
    </location>
</feature>
<feature type="modified residue" description="Phosphoserine" evidence="2">
    <location>
        <position position="367"/>
    </location>
</feature>
<feature type="cross-link" description="Glycyl lysine isopeptide (Lys-Gly) (interchain with G-Cter in SUMO2)" evidence="2">
    <location>
        <position position="403"/>
    </location>
</feature>
<feature type="cross-link" description="Glycyl lysine isopeptide (Lys-Gly) (interchain with G-Cter in SUMO2)" evidence="2">
    <location>
        <position position="404"/>
    </location>
</feature>
<feature type="cross-link" description="Glycyl lysine isopeptide (Lys-Gly) (interchain with G-Cter in SUMO2)" evidence="2">
    <location>
        <position position="457"/>
    </location>
</feature>
<feature type="cross-link" description="Glycyl lysine isopeptide (Lys-Gly) (interchain with G-Cter in SUMO2)" evidence="2">
    <location>
        <position position="467"/>
    </location>
</feature>
<feature type="mutagenesis site" description="Impairs DNA-binding." evidence="8">
    <original>P</original>
    <variation>A</variation>
    <location>
        <position position="268"/>
    </location>
</feature>
<feature type="mutagenesis site" description="Impairs DNA-binding." evidence="8">
    <original>W</original>
    <variation>A</variation>
    <location>
        <position position="299"/>
    </location>
</feature>
<feature type="mutagenesis site" description="Impairs DNA-binding." evidence="8">
    <original>F</original>
    <variation>A</variation>
    <location>
        <position position="317"/>
    </location>
</feature>
<feature type="mutagenesis site" description="Impairs DNA-binding." evidence="8">
    <original>Y</original>
    <variation>A</variation>
    <location>
        <position position="330"/>
    </location>
</feature>
<feature type="mutagenesis site" description="No effect on cellular location." evidence="9">
    <original>K</original>
    <variation>A</variation>
    <location>
        <position position="457"/>
    </location>
</feature>
<feature type="mutagenesis site" description="Abolishes nuclear localization." evidence="9">
    <original>P</original>
    <variation>A</variation>
    <location>
        <position position="463"/>
    </location>
</feature>
<feature type="mutagenesis site" description="Abolishes nuclear localization." evidence="9">
    <original>K</original>
    <variation>A</variation>
    <location>
        <position position="466"/>
    </location>
</feature>
<feature type="mutagenesis site" description="Abolishes nuclear localization." evidence="9">
    <original>K</original>
    <variation>A</variation>
    <location>
        <position position="467"/>
    </location>
</feature>
<feature type="mutagenesis site" description="Abolishes cytosolic localization." evidence="9">
    <original>G</original>
    <variation>A</variation>
    <location>
        <position position="532"/>
    </location>
</feature>
<feature type="mutagenesis site" description="Abolishes cytosolic localization." evidence="9">
    <original>Y</original>
    <variation>A</variation>
    <location>
        <position position="535"/>
    </location>
</feature>
<feature type="mutagenesis site" description="No effect on cellular location." evidence="9">
    <original>Y</original>
    <variation>F</variation>
    <location>
        <position position="535"/>
    </location>
</feature>
<feature type="mutagenesis site" description="Abolishes cytosolic localization." evidence="9">
    <original>G</original>
    <variation>A</variation>
    <location>
        <position position="537"/>
    </location>
</feature>
<feature type="mutagenesis site" description="Abolishes cytosolic localization." evidence="9">
    <original>L</original>
    <variation>A</variation>
    <location>
        <position position="539"/>
    </location>
</feature>
<feature type="sequence conflict" description="In Ref. 3; AAH50925." evidence="14" ref="3">
    <location>
        <begin position="405"/>
        <end position="406"/>
    </location>
</feature>
<evidence type="ECO:0000250" key="1"/>
<evidence type="ECO:0000250" key="2">
    <source>
        <dbReference type="UniProtKB" id="Q99856"/>
    </source>
</evidence>
<evidence type="ECO:0000255" key="3">
    <source>
        <dbReference type="PROSITE-ProRule" id="PRU00355"/>
    </source>
</evidence>
<evidence type="ECO:0000255" key="4">
    <source>
        <dbReference type="PROSITE-ProRule" id="PRU00819"/>
    </source>
</evidence>
<evidence type="ECO:0000256" key="5">
    <source>
        <dbReference type="SAM" id="MobiDB-lite"/>
    </source>
</evidence>
<evidence type="ECO:0000269" key="6">
    <source>
    </source>
</evidence>
<evidence type="ECO:0000269" key="7">
    <source>
    </source>
</evidence>
<evidence type="ECO:0000269" key="8">
    <source>
    </source>
</evidence>
<evidence type="ECO:0000269" key="9">
    <source>
    </source>
</evidence>
<evidence type="ECO:0000269" key="10">
    <source>
    </source>
</evidence>
<evidence type="ECO:0000269" key="11">
    <source>
    </source>
</evidence>
<evidence type="ECO:0000269" key="12">
    <source>
    </source>
</evidence>
<evidence type="ECO:0000269" key="13">
    <source>
    </source>
</evidence>
<evidence type="ECO:0000305" key="14"/>
<evidence type="ECO:0007744" key="15">
    <source>
    </source>
</evidence>
<evidence type="ECO:0007744" key="16">
    <source>
    </source>
</evidence>
<organism>
    <name type="scientific">Mus musculus</name>
    <name type="common">Mouse</name>
    <dbReference type="NCBI Taxonomy" id="10090"/>
    <lineage>
        <taxon>Eukaryota</taxon>
        <taxon>Metazoa</taxon>
        <taxon>Chordata</taxon>
        <taxon>Craniata</taxon>
        <taxon>Vertebrata</taxon>
        <taxon>Euteleostomi</taxon>
        <taxon>Mammalia</taxon>
        <taxon>Eutheria</taxon>
        <taxon>Euarchontoglires</taxon>
        <taxon>Glires</taxon>
        <taxon>Rodentia</taxon>
        <taxon>Myomorpha</taxon>
        <taxon>Muroidea</taxon>
        <taxon>Muridae</taxon>
        <taxon>Murinae</taxon>
        <taxon>Mus</taxon>
        <taxon>Mus</taxon>
    </lineage>
</organism>
<reference key="1">
    <citation type="journal article" date="1995" name="Genes Dev.">
        <title>The immunoglobulin heavy-chain matrix-associating regions are bound by Bright: a B cell-specific trans-activator that describes a new DNA-binding protein family.</title>
        <authorList>
            <person name="Herrscher R.F."/>
            <person name="Kaplan M.H."/>
            <person name="Lelsz D.L."/>
            <person name="Das C."/>
            <person name="Scheuermann R."/>
            <person name="Tucker P.W."/>
        </authorList>
    </citation>
    <scope>NUCLEOTIDE SEQUENCE [MRNA]</scope>
    <scope>FUNCTION</scope>
</reference>
<reference key="2">
    <citation type="journal article" date="2005" name="Science">
        <title>The transcriptional landscape of the mammalian genome.</title>
        <authorList>
            <person name="Carninci P."/>
            <person name="Kasukawa T."/>
            <person name="Katayama S."/>
            <person name="Gough J."/>
            <person name="Frith M.C."/>
            <person name="Maeda N."/>
            <person name="Oyama R."/>
            <person name="Ravasi T."/>
            <person name="Lenhard B."/>
            <person name="Wells C."/>
            <person name="Kodzius R."/>
            <person name="Shimokawa K."/>
            <person name="Bajic V.B."/>
            <person name="Brenner S.E."/>
            <person name="Batalov S."/>
            <person name="Forrest A.R."/>
            <person name="Zavolan M."/>
            <person name="Davis M.J."/>
            <person name="Wilming L.G."/>
            <person name="Aidinis V."/>
            <person name="Allen J.E."/>
            <person name="Ambesi-Impiombato A."/>
            <person name="Apweiler R."/>
            <person name="Aturaliya R.N."/>
            <person name="Bailey T.L."/>
            <person name="Bansal M."/>
            <person name="Baxter L."/>
            <person name="Beisel K.W."/>
            <person name="Bersano T."/>
            <person name="Bono H."/>
            <person name="Chalk A.M."/>
            <person name="Chiu K.P."/>
            <person name="Choudhary V."/>
            <person name="Christoffels A."/>
            <person name="Clutterbuck D.R."/>
            <person name="Crowe M.L."/>
            <person name="Dalla E."/>
            <person name="Dalrymple B.P."/>
            <person name="de Bono B."/>
            <person name="Della Gatta G."/>
            <person name="di Bernardo D."/>
            <person name="Down T."/>
            <person name="Engstrom P."/>
            <person name="Fagiolini M."/>
            <person name="Faulkner G."/>
            <person name="Fletcher C.F."/>
            <person name="Fukushima T."/>
            <person name="Furuno M."/>
            <person name="Futaki S."/>
            <person name="Gariboldi M."/>
            <person name="Georgii-Hemming P."/>
            <person name="Gingeras T.R."/>
            <person name="Gojobori T."/>
            <person name="Green R.E."/>
            <person name="Gustincich S."/>
            <person name="Harbers M."/>
            <person name="Hayashi Y."/>
            <person name="Hensch T.K."/>
            <person name="Hirokawa N."/>
            <person name="Hill D."/>
            <person name="Huminiecki L."/>
            <person name="Iacono M."/>
            <person name="Ikeo K."/>
            <person name="Iwama A."/>
            <person name="Ishikawa T."/>
            <person name="Jakt M."/>
            <person name="Kanapin A."/>
            <person name="Katoh M."/>
            <person name="Kawasawa Y."/>
            <person name="Kelso J."/>
            <person name="Kitamura H."/>
            <person name="Kitano H."/>
            <person name="Kollias G."/>
            <person name="Krishnan S.P."/>
            <person name="Kruger A."/>
            <person name="Kummerfeld S.K."/>
            <person name="Kurochkin I.V."/>
            <person name="Lareau L.F."/>
            <person name="Lazarevic D."/>
            <person name="Lipovich L."/>
            <person name="Liu J."/>
            <person name="Liuni S."/>
            <person name="McWilliam S."/>
            <person name="Madan Babu M."/>
            <person name="Madera M."/>
            <person name="Marchionni L."/>
            <person name="Matsuda H."/>
            <person name="Matsuzawa S."/>
            <person name="Miki H."/>
            <person name="Mignone F."/>
            <person name="Miyake S."/>
            <person name="Morris K."/>
            <person name="Mottagui-Tabar S."/>
            <person name="Mulder N."/>
            <person name="Nakano N."/>
            <person name="Nakauchi H."/>
            <person name="Ng P."/>
            <person name="Nilsson R."/>
            <person name="Nishiguchi S."/>
            <person name="Nishikawa S."/>
            <person name="Nori F."/>
            <person name="Ohara O."/>
            <person name="Okazaki Y."/>
            <person name="Orlando V."/>
            <person name="Pang K.C."/>
            <person name="Pavan W.J."/>
            <person name="Pavesi G."/>
            <person name="Pesole G."/>
            <person name="Petrovsky N."/>
            <person name="Piazza S."/>
            <person name="Reed J."/>
            <person name="Reid J.F."/>
            <person name="Ring B.Z."/>
            <person name="Ringwald M."/>
            <person name="Rost B."/>
            <person name="Ruan Y."/>
            <person name="Salzberg S.L."/>
            <person name="Sandelin A."/>
            <person name="Schneider C."/>
            <person name="Schoenbach C."/>
            <person name="Sekiguchi K."/>
            <person name="Semple C.A."/>
            <person name="Seno S."/>
            <person name="Sessa L."/>
            <person name="Sheng Y."/>
            <person name="Shibata Y."/>
            <person name="Shimada H."/>
            <person name="Shimada K."/>
            <person name="Silva D."/>
            <person name="Sinclair B."/>
            <person name="Sperling S."/>
            <person name="Stupka E."/>
            <person name="Sugiura K."/>
            <person name="Sultana R."/>
            <person name="Takenaka Y."/>
            <person name="Taki K."/>
            <person name="Tammoja K."/>
            <person name="Tan S.L."/>
            <person name="Tang S."/>
            <person name="Taylor M.S."/>
            <person name="Tegner J."/>
            <person name="Teichmann S.A."/>
            <person name="Ueda H.R."/>
            <person name="van Nimwegen E."/>
            <person name="Verardo R."/>
            <person name="Wei C.L."/>
            <person name="Yagi K."/>
            <person name="Yamanishi H."/>
            <person name="Zabarovsky E."/>
            <person name="Zhu S."/>
            <person name="Zimmer A."/>
            <person name="Hide W."/>
            <person name="Bult C."/>
            <person name="Grimmond S.M."/>
            <person name="Teasdale R.D."/>
            <person name="Liu E.T."/>
            <person name="Brusic V."/>
            <person name="Quackenbush J."/>
            <person name="Wahlestedt C."/>
            <person name="Mattick J.S."/>
            <person name="Hume D.A."/>
            <person name="Kai C."/>
            <person name="Sasaki D."/>
            <person name="Tomaru Y."/>
            <person name="Fukuda S."/>
            <person name="Kanamori-Katayama M."/>
            <person name="Suzuki M."/>
            <person name="Aoki J."/>
            <person name="Arakawa T."/>
            <person name="Iida J."/>
            <person name="Imamura K."/>
            <person name="Itoh M."/>
            <person name="Kato T."/>
            <person name="Kawaji H."/>
            <person name="Kawagashira N."/>
            <person name="Kawashima T."/>
            <person name="Kojima M."/>
            <person name="Kondo S."/>
            <person name="Konno H."/>
            <person name="Nakano K."/>
            <person name="Ninomiya N."/>
            <person name="Nishio T."/>
            <person name="Okada M."/>
            <person name="Plessy C."/>
            <person name="Shibata K."/>
            <person name="Shiraki T."/>
            <person name="Suzuki S."/>
            <person name="Tagami M."/>
            <person name="Waki K."/>
            <person name="Watahiki A."/>
            <person name="Okamura-Oho Y."/>
            <person name="Suzuki H."/>
            <person name="Kawai J."/>
            <person name="Hayashizaki Y."/>
        </authorList>
    </citation>
    <scope>NUCLEOTIDE SEQUENCE [LARGE SCALE MRNA]</scope>
    <source>
        <strain>C57BL/6J</strain>
        <strain>NOD</strain>
    </source>
</reference>
<reference key="3">
    <citation type="journal article" date="2004" name="Genome Res.">
        <title>The status, quality, and expansion of the NIH full-length cDNA project: the Mammalian Gene Collection (MGC).</title>
        <authorList>
            <consortium name="The MGC Project Team"/>
        </authorList>
    </citation>
    <scope>NUCLEOTIDE SEQUENCE [LARGE SCALE MRNA]</scope>
    <source>
        <strain>C57BL/6J</strain>
        <tissue>Brain</tissue>
    </source>
</reference>
<reference key="4">
    <citation type="journal article" date="1998" name="J. Immunol.">
        <title>Expression of bright at two distinct stages of B lymphocyte development.</title>
        <authorList>
            <person name="Webb C.F."/>
            <person name="Smith E.A."/>
            <person name="Medina K.L."/>
            <person name="Buchanan K.L."/>
            <person name="Smithson G."/>
            <person name="Dou S."/>
        </authorList>
    </citation>
    <scope>TISSUE SPECIFICITY</scope>
    <scope>DEVELOPMENTAL STAGE</scope>
</reference>
<reference key="5">
    <citation type="journal article" date="2000" name="J. Immunol.">
        <title>The transcription factor Bright associates with Bruton's tyrosine kinase, the defective protein in immunodeficiency disease.</title>
        <authorList>
            <person name="Webb C.F."/>
            <person name="Yamashita Y."/>
            <person name="Ayers N."/>
            <person name="Evetts S."/>
            <person name="Paulin Y."/>
            <person name="Conley M.E."/>
            <person name="Smith E.A."/>
        </authorList>
    </citation>
    <scope>INTERACTION WITH BTK</scope>
</reference>
<reference key="6">
    <citation type="journal article" date="2001" name="J. Biol. Chem.">
        <title>Transcriptional activation by a matrix associating region-binding protein. contextual requirements for the function of bright.</title>
        <authorList>
            <person name="Kaplan M.H."/>
            <person name="Zong R.-T."/>
            <person name="Herrscher R.F."/>
            <person name="Scheuermann R.H."/>
            <person name="Tucker P.W."/>
        </authorList>
    </citation>
    <scope>FUNCTION</scope>
</reference>
<reference key="7">
    <citation type="journal article" date="2004" name="J. Biol. Chem.">
        <title>Mutations in the DNA-binding domain of the transcription factor Bright act as dominant negative proteins and interfere with immunoglobulin transactivation.</title>
        <authorList>
            <person name="Nixon J.C."/>
            <person name="Rajaiya J."/>
            <person name="Webb C.F."/>
        </authorList>
    </citation>
    <scope>DNA-BINDING</scope>
    <scope>SUBUNIT</scope>
    <scope>SUBCELLULAR LOCATION</scope>
    <scope>MUTAGENESIS OF PRO-268; TRP-299; PHE-317 AND TYR-330</scope>
</reference>
<reference key="8">
    <citation type="journal article" date="2006" name="Mol. Cell. Biol.">
        <title>A regulated nucleocytoplasmic shuttle contributes to Bright's function as a transcriptional activator of immunoglobulin genes.</title>
        <authorList>
            <person name="Kim D."/>
            <person name="Tucker P.W."/>
        </authorList>
    </citation>
    <scope>SUBCELLULAR LOCATION</scope>
    <scope>MUTAGENESIS OF LYS-457; PRO-463; LYS-466; LYS-467; GLY-532; TYR-535; GLY-537 AND LEU-539</scope>
</reference>
<reference key="9">
    <citation type="journal article" date="2006" name="Mol. Cell. Biol.">
        <title>Induction of immunoglobulin heavy-chain transcription through the transcription factor Bright requires TFII-I.</title>
        <authorList>
            <person name="Rajaiya J."/>
            <person name="Nixon J.C."/>
            <person name="Ayers N."/>
            <person name="Desgranges Z.P."/>
            <person name="Roy A.L."/>
            <person name="Webb C.F."/>
        </authorList>
    </citation>
    <scope>INTERACTION WITH GTF2I AND BTK</scope>
</reference>
<reference key="10">
    <citation type="journal article" date="2007" name="J. Immunol.">
        <title>Anti-nuclear antibody production and autoimmunity in transgenic mice that overexpress the transcription factor Bright.</title>
        <authorList>
            <person name="Shankar M."/>
            <person name="Nixon J.C."/>
            <person name="Maier S."/>
            <person name="Workman J."/>
            <person name="Farris A.D."/>
            <person name="Webb C.F."/>
        </authorList>
    </citation>
    <scope>FUNCTION</scope>
</reference>
<reference key="11">
    <citation type="journal article" date="2009" name="Immunity">
        <title>The phagosomal proteome in interferon-gamma-activated macrophages.</title>
        <authorList>
            <person name="Trost M."/>
            <person name="English L."/>
            <person name="Lemieux S."/>
            <person name="Courcelles M."/>
            <person name="Desjardins M."/>
            <person name="Thibault P."/>
        </authorList>
    </citation>
    <scope>PHOSPHORYLATION [LARGE SCALE ANALYSIS] AT SER-127</scope>
    <scope>IDENTIFICATION BY MASS SPECTROMETRY [LARGE SCALE ANALYSIS]</scope>
</reference>
<reference key="12">
    <citation type="journal article" date="2010" name="Cell">
        <title>A tissue-specific atlas of mouse protein phosphorylation and expression.</title>
        <authorList>
            <person name="Huttlin E.L."/>
            <person name="Jedrychowski M.P."/>
            <person name="Elias J.E."/>
            <person name="Goswami T."/>
            <person name="Rad R."/>
            <person name="Beausoleil S.A."/>
            <person name="Villen J."/>
            <person name="Haas W."/>
            <person name="Sowa M.E."/>
            <person name="Gygi S.P."/>
        </authorList>
    </citation>
    <scope>PHOSPHORYLATION [LARGE SCALE ANALYSIS] AT SER-82; SER-89; SER-127 AND SER-358</scope>
    <scope>IDENTIFICATION BY MASS SPECTROMETRY [LARGE SCALE ANALYSIS]</scope>
    <source>
        <tissue>Kidney</tissue>
        <tissue>Lung</tissue>
        <tissue>Pancreas</tissue>
        <tissue>Spleen</tissue>
        <tissue>Testis</tissue>
    </source>
</reference>
<sequence length="601" mass="64173">MKLQAVMETLIQRQQRARQELEARQAPPPPPPEPTGVRARTTMTDEDREPENARMHRTQMAALAAMRAAAAGLGHPSSPGGSEDGPPISGDEDTAREGTLSSPALHGSVLEGAGHAEGDRHLMDVGSDDDDTKSKWEEQELEELGEEEEEEEEEDDFEEEEEEEEGLGPPESASLGTAGLFTRKAPPAQAFRGDGGPRMLSGPERLGPGPAHPSHMASQMPPPDHGDWTFEEQFKQLYELDADPKRKEFLDDLFSFMQKRGTPVNRIPIMAKQVLDLFMLYVLVTEKGGLVEVINKKLWREITKGLNLPTSITSAAFTLRTQYMKYLYPYECERRGLSSPNELQAAIDSNRREGRRQSFGGSLFAYSPSGAHSMLPSPKLPVTPLGLAASTNGSSITPAPKIKKEEDSAIPITVPGRLPVSLAGHPVVAAQAAAVQAAAAQAAVAAQAAALEQLREKLESTEPPEKKMALVADEQQRLMQRAVQQSFLAMTAQLPMNIRINSQASESRQDSAVSLTSANGSNSISMSVEMNGIVYTGVLFAQPPPPTAPSAPGKGGVSSIGTNTTTGSRTGASGSTVSGGQVGLPGVSTPTMSSTSNNSLP</sequence>
<protein>
    <recommendedName>
        <fullName>AT-rich interactive domain-containing protein 3A</fullName>
        <shortName>ARID domain-containing protein 3A</shortName>
    </recommendedName>
    <alternativeName>
        <fullName>B-cell regulator of IgH transcription</fullName>
        <shortName>Bright</shortName>
    </alternativeName>
    <alternativeName>
        <fullName>Dead ringer-like protein 1</fullName>
    </alternativeName>
</protein>